<dbReference type="EC" id="4.2.1.79" evidence="3 4 5"/>
<dbReference type="EMBL" id="CR382132">
    <property type="protein sequence ID" value="CAG77711.1"/>
    <property type="molecule type" value="Genomic_DNA"/>
</dbReference>
<dbReference type="RefSeq" id="XP_504908.1">
    <property type="nucleotide sequence ID" value="XM_504908.1"/>
</dbReference>
<dbReference type="SMR" id="Q6C354"/>
<dbReference type="FunCoup" id="Q6C354">
    <property type="interactions" value="48"/>
</dbReference>
<dbReference type="STRING" id="284591.Q6C354"/>
<dbReference type="EnsemblFungi" id="CAG77711">
    <property type="protein sequence ID" value="CAG77711"/>
    <property type="gene ID" value="YALI0_F02497g"/>
</dbReference>
<dbReference type="KEGG" id="yli:2908117"/>
<dbReference type="VEuPathDB" id="FungiDB:YALI0_F02497g"/>
<dbReference type="HOGENOM" id="CLU_021803_1_0_1"/>
<dbReference type="InParanoid" id="Q6C354"/>
<dbReference type="OMA" id="DHSVMYI"/>
<dbReference type="OrthoDB" id="82371at4891"/>
<dbReference type="UniPathway" id="UPA00946"/>
<dbReference type="Proteomes" id="UP000001300">
    <property type="component" value="Chromosome F"/>
</dbReference>
<dbReference type="GO" id="GO:0005739">
    <property type="term" value="C:mitochondrion"/>
    <property type="evidence" value="ECO:0007669"/>
    <property type="project" value="UniProtKB-SubCell"/>
</dbReference>
<dbReference type="GO" id="GO:0051537">
    <property type="term" value="F:2 iron, 2 sulfur cluster binding"/>
    <property type="evidence" value="ECO:0007669"/>
    <property type="project" value="InterPro"/>
</dbReference>
<dbReference type="GO" id="GO:0047547">
    <property type="term" value="F:2-methylcitrate dehydratase activity"/>
    <property type="evidence" value="ECO:0007669"/>
    <property type="project" value="UniProtKB-EC"/>
</dbReference>
<dbReference type="GO" id="GO:0019679">
    <property type="term" value="P:propionate metabolic process, methylcitrate cycle"/>
    <property type="evidence" value="ECO:0007669"/>
    <property type="project" value="InterPro"/>
</dbReference>
<dbReference type="FunFam" id="3.30.1330.120:FF:000001">
    <property type="entry name" value="2-methylcitrate dehydratase"/>
    <property type="match status" value="1"/>
</dbReference>
<dbReference type="Gene3D" id="1.10.4100.10">
    <property type="entry name" value="2-methylcitrate dehydratase PrpD"/>
    <property type="match status" value="1"/>
</dbReference>
<dbReference type="Gene3D" id="3.30.1330.120">
    <property type="entry name" value="2-methylcitrate dehydratase PrpD"/>
    <property type="match status" value="1"/>
</dbReference>
<dbReference type="InterPro" id="IPR012705">
    <property type="entry name" value="2Me_IsoCit_deHydtase_PrpD"/>
</dbReference>
<dbReference type="InterPro" id="IPR036148">
    <property type="entry name" value="MmgE/PrpD_sf"/>
</dbReference>
<dbReference type="InterPro" id="IPR042183">
    <property type="entry name" value="MmgE/PrpD_sf_1"/>
</dbReference>
<dbReference type="InterPro" id="IPR042188">
    <property type="entry name" value="MmgE/PrpD_sf_2"/>
</dbReference>
<dbReference type="InterPro" id="IPR005656">
    <property type="entry name" value="MmgE_PrpD"/>
</dbReference>
<dbReference type="InterPro" id="IPR045337">
    <property type="entry name" value="MmgE_PrpD_C"/>
</dbReference>
<dbReference type="InterPro" id="IPR045336">
    <property type="entry name" value="MmgE_PrpD_N"/>
</dbReference>
<dbReference type="NCBIfam" id="NF006943">
    <property type="entry name" value="PRK09425.1"/>
    <property type="match status" value="1"/>
</dbReference>
<dbReference type="NCBIfam" id="TIGR02330">
    <property type="entry name" value="prpD"/>
    <property type="match status" value="1"/>
</dbReference>
<dbReference type="PANTHER" id="PTHR16943">
    <property type="entry name" value="2-METHYLCITRATE DEHYDRATASE-RELATED"/>
    <property type="match status" value="1"/>
</dbReference>
<dbReference type="PANTHER" id="PTHR16943:SF16">
    <property type="entry name" value="2-METHYLCITRATE DEHYDRATASE-RELATED"/>
    <property type="match status" value="1"/>
</dbReference>
<dbReference type="Pfam" id="PF19305">
    <property type="entry name" value="MmgE_PrpD_C"/>
    <property type="match status" value="1"/>
</dbReference>
<dbReference type="Pfam" id="PF03972">
    <property type="entry name" value="MmgE_PrpD_N"/>
    <property type="match status" value="1"/>
</dbReference>
<dbReference type="SUPFAM" id="SSF103378">
    <property type="entry name" value="2-methylcitrate dehydratase PrpD"/>
    <property type="match status" value="1"/>
</dbReference>
<keyword id="KW-0456">Lyase</keyword>
<keyword id="KW-0496">Mitochondrion</keyword>
<keyword id="KW-1185">Reference proteome</keyword>
<keyword id="KW-0809">Transit peptide</keyword>
<accession>Q6C354</accession>
<comment type="function">
    <text evidence="2 3 4 5 6">Component of the methylcitrate cycle that catalyzes the dehydration of 2-methylcitrate to 2-methyl-cis-aconitate. The methylcitrate cycle is a metabolic pathway for the consumption of propionic acid.</text>
</comment>
<comment type="catalytic activity">
    <reaction evidence="3 4 5">
        <text>(2S,3S)-2-methylcitrate = 2-methyl-cis-aconitate + H2O</text>
        <dbReference type="Rhea" id="RHEA:17725"/>
        <dbReference type="ChEBI" id="CHEBI:15377"/>
        <dbReference type="ChEBI" id="CHEBI:57872"/>
        <dbReference type="ChEBI" id="CHEBI:58853"/>
        <dbReference type="EC" id="4.2.1.79"/>
    </reaction>
</comment>
<comment type="activity regulation">
    <text evidence="5">Several bivalent metal ions, such as nickel, copper, zinc, mercury, and lead, inhibit the activity to some extent. Inhibited by structural analogs such as citrate, cis-aconitate, isocitrate, 2-methylisocitrate, tricarballylate and fluorocitrate, but not by trans-aconitate or adipate.</text>
</comment>
<comment type="biophysicochemical properties">
    <kinetics>
        <KM evidence="5">0.19 mM for 2-methylcitrate</KM>
    </kinetics>
    <phDependence>
        <text evidence="4">Optimum pH is 6.5-7.0.</text>
    </phDependence>
    <temperatureDependence>
        <text evidence="4">Optimum temperature is 25-40 degrees Celsius.</text>
    </temperatureDependence>
</comment>
<comment type="pathway">
    <text evidence="4 5">Organic acid metabolism; propanoate degradation.</text>
</comment>
<comment type="subunit">
    <text evidence="5">Monomer.</text>
</comment>
<comment type="subcellular location">
    <subcellularLocation>
        <location evidence="3">Mitochondrion</location>
    </subcellularLocation>
</comment>
<comment type="induction">
    <text evidence="4">Slightly repressed by glucose.</text>
</comment>
<comment type="disruption phenotype">
    <text evidence="2">Leads to lipid accumulation and increased citrate production when biodiesel-derived waste glycerol is used as substrate.</text>
</comment>
<comment type="similarity">
    <text evidence="10">Belongs to the PrpD family.</text>
</comment>
<sequence length="520" mass="57737">MRAFRSAANFGAASNIYRKSFTPASIASNRFVSARMSSIMTDNARPNTDKVVQDIADYIHDYKIDSSVAMETARLCFLDTLGCGLEGLKYQQCANIVGPVVPGTIVPNGTKVPGTDYQVDPVRGAFNIGTIIRWLDFNDCWLAAEWGHPSDNLGGILAVADWQTRSAKAGLEGKVFKVKDVLEGMIKAHEIQGGLAIENSFNRVGLDHVVLVKIASTAVVSGMLGLSREQTADAISQAFVDGQSLRTYRHAPNTMSRKSWAAGDATSRAVNLALLVKKGEGGMPSILTAKTWGFYDVLFGGKEFKFQRPYGSYVMENVLFKISFPAEFHAQTACESAMLLHEELKKLGKTSDDIASIKIRTQEAAMRIIDKKGPLHNYADRDHCIQYMVAIPLIHGRLTADDYTDEIASDPRIDALREKMECVEDKRFSEEYHAPDKRYIGNAIEITLKDGTVLDEIEVNYPIGHRQRREEGTPVLLEKFARHLRGRFPEGQVEKILAASNQDIVNMDIDEYVDLYVKKD</sequence>
<feature type="transit peptide" description="Mitochondrion" evidence="1">
    <location>
        <begin position="1"/>
        <end position="37"/>
    </location>
</feature>
<feature type="chain" id="PRO_0000433358" description="2-methylcitrate dehydratase, mitochondrial" evidence="1">
    <location>
        <begin position="38"/>
        <end position="520"/>
    </location>
</feature>
<reference key="1">
    <citation type="journal article" date="2004" name="Nature">
        <title>Genome evolution in yeasts.</title>
        <authorList>
            <person name="Dujon B."/>
            <person name="Sherman D."/>
            <person name="Fischer G."/>
            <person name="Durrens P."/>
            <person name="Casaregola S."/>
            <person name="Lafontaine I."/>
            <person name="de Montigny J."/>
            <person name="Marck C."/>
            <person name="Neuveglise C."/>
            <person name="Talla E."/>
            <person name="Goffard N."/>
            <person name="Frangeul L."/>
            <person name="Aigle M."/>
            <person name="Anthouard V."/>
            <person name="Babour A."/>
            <person name="Barbe V."/>
            <person name="Barnay S."/>
            <person name="Blanchin S."/>
            <person name="Beckerich J.-M."/>
            <person name="Beyne E."/>
            <person name="Bleykasten C."/>
            <person name="Boisrame A."/>
            <person name="Boyer J."/>
            <person name="Cattolico L."/>
            <person name="Confanioleri F."/>
            <person name="de Daruvar A."/>
            <person name="Despons L."/>
            <person name="Fabre E."/>
            <person name="Fairhead C."/>
            <person name="Ferry-Dumazet H."/>
            <person name="Groppi A."/>
            <person name="Hantraye F."/>
            <person name="Hennequin C."/>
            <person name="Jauniaux N."/>
            <person name="Joyet P."/>
            <person name="Kachouri R."/>
            <person name="Kerrest A."/>
            <person name="Koszul R."/>
            <person name="Lemaire M."/>
            <person name="Lesur I."/>
            <person name="Ma L."/>
            <person name="Muller H."/>
            <person name="Nicaud J.-M."/>
            <person name="Nikolski M."/>
            <person name="Oztas S."/>
            <person name="Ozier-Kalogeropoulos O."/>
            <person name="Pellenz S."/>
            <person name="Potier S."/>
            <person name="Richard G.-F."/>
            <person name="Straub M.-L."/>
            <person name="Suleau A."/>
            <person name="Swennen D."/>
            <person name="Tekaia F."/>
            <person name="Wesolowski-Louvel M."/>
            <person name="Westhof E."/>
            <person name="Wirth B."/>
            <person name="Zeniou-Meyer M."/>
            <person name="Zivanovic Y."/>
            <person name="Bolotin-Fukuhara M."/>
            <person name="Thierry A."/>
            <person name="Bouchier C."/>
            <person name="Caudron B."/>
            <person name="Scarpelli C."/>
            <person name="Gaillardin C."/>
            <person name="Weissenbach J."/>
            <person name="Wincker P."/>
            <person name="Souciet J.-L."/>
        </authorList>
    </citation>
    <scope>NUCLEOTIDE SEQUENCE [LARGE SCALE GENOMIC DNA]</scope>
    <source>
        <strain>CLIB 122 / E 150</strain>
    </source>
</reference>
<reference key="2">
    <citation type="journal article" date="1981" name="Agric. Biol. Chem.">
        <title>2-methylcitrate dehydratase, a new enzyme functioning at the methylcitric acid cycle of propionate metabolism.</title>
        <authorList>
            <person name="Tabuchi T."/>
            <person name="Aoki H."/>
            <person name="Uchiyama H."/>
            <person name="Nakahara T."/>
        </authorList>
    </citation>
    <scope>FUNCTION</scope>
    <scope>CATALYTIC ACTIVITY</scope>
    <scope>BIOPHYSICOCHEMICAL PROPERTIES</scope>
    <scope>INDUCTION</scope>
</reference>
<reference key="3">
    <citation type="journal article" date="1981" name="Agric. Biol. Chem.">
        <title>Purification and properties of 2-methylcitrate dehydratase from Yarrowia lipolytica.</title>
        <authorList>
            <person name="Aoki H."/>
            <person name="Tabuchi T."/>
        </authorList>
    </citation>
    <scope>FUNCTION</scope>
    <scope>CATALYTIC ACTIVITY</scope>
    <scope>ACTIVITY REGULATION</scope>
    <scope>BIOPHYSICOCHEMICAL PROPERTIES</scope>
    <scope>SUBUNIT</scope>
</reference>
<reference key="4">
    <citation type="journal article" date="1982" name="Eur. J. Biochem.">
        <title>Subcellular localization of the methylcitric-acid-cycle enzymes in propionate metabolism of Yarrowia lipolytica.</title>
        <authorList>
            <person name="Uchiyama H."/>
            <person name="Ando M."/>
            <person name="Toyonaka Y."/>
            <person name="Tabuchi T."/>
        </authorList>
    </citation>
    <scope>SUBCELLULAR LOCATION</scope>
    <scope>FUNCTION</scope>
    <scope>CATALYTIC ACTIVITY</scope>
</reference>
<reference key="5">
    <citation type="journal article" date="1995" name="Biosci. Biotechnol. Biochem.">
        <title>Characteristics of 2-methylisocitrate dehydratase, isolated from Yallowia lipolytica, in comparison with aconitase.</title>
        <authorList>
            <person name="Tabuchi T."/>
            <person name="Umetsua H."/>
            <person name="Aokiab H."/>
            <person name="Uchiyamaac H."/>
        </authorList>
    </citation>
    <scope>FUNCTION</scope>
</reference>
<reference key="6">
    <citation type="journal article" date="2013" name="J. Biotechnol.">
        <title>Importance of the methyl-citrate cycle on glycerol metabolism in the yeast Yarrowia lipolytica.</title>
        <authorList>
            <person name="Papanikolaou S."/>
            <person name="Beopoulos A."/>
            <person name="Koletti A."/>
            <person name="Thevenieau F."/>
            <person name="Koutinas A.A."/>
            <person name="Nicaud J.M."/>
            <person name="Aggelis G."/>
        </authorList>
    </citation>
    <scope>FUNCTION</scope>
    <scope>DISRUPTION PHENOTYPE</scope>
</reference>
<organism>
    <name type="scientific">Yarrowia lipolytica (strain CLIB 122 / E 150)</name>
    <name type="common">Yeast</name>
    <name type="synonym">Candida lipolytica</name>
    <dbReference type="NCBI Taxonomy" id="284591"/>
    <lineage>
        <taxon>Eukaryota</taxon>
        <taxon>Fungi</taxon>
        <taxon>Dikarya</taxon>
        <taxon>Ascomycota</taxon>
        <taxon>Saccharomycotina</taxon>
        <taxon>Dipodascomycetes</taxon>
        <taxon>Dipodascales</taxon>
        <taxon>Dipodascales incertae sedis</taxon>
        <taxon>Yarrowia</taxon>
    </lineage>
</organism>
<name>PRPD_YARLI</name>
<gene>
    <name evidence="7" type="primary">PDH1</name>
    <name type="ordered locus">YALI0F02497g</name>
</gene>
<proteinExistence type="evidence at protein level"/>
<protein>
    <recommendedName>
        <fullName evidence="8 9">2-methylcitrate dehydratase, mitochondrial</fullName>
        <ecNumber evidence="3 4 5">4.2.1.79</ecNumber>
    </recommendedName>
</protein>
<evidence type="ECO:0000255" key="1"/>
<evidence type="ECO:0000269" key="2">
    <source>
    </source>
</evidence>
<evidence type="ECO:0000269" key="3">
    <source>
    </source>
</evidence>
<evidence type="ECO:0000269" key="4">
    <source ref="2"/>
</evidence>
<evidence type="ECO:0000269" key="5">
    <source ref="3"/>
</evidence>
<evidence type="ECO:0000269" key="6">
    <source ref="5"/>
</evidence>
<evidence type="ECO:0000303" key="7">
    <source>
    </source>
</evidence>
<evidence type="ECO:0000303" key="8">
    <source ref="2"/>
</evidence>
<evidence type="ECO:0000303" key="9">
    <source ref="3"/>
</evidence>
<evidence type="ECO:0000305" key="10"/>